<accession>C0H451</accession>
<proteinExistence type="predicted"/>
<dbReference type="EMBL" id="AL009126">
    <property type="protein sequence ID" value="CAX52660.1"/>
    <property type="molecule type" value="Genomic_DNA"/>
</dbReference>
<dbReference type="RefSeq" id="WP_003230440.1">
    <property type="nucleotide sequence ID" value="NZ_OZ025638.1"/>
</dbReference>
<dbReference type="RefSeq" id="YP_003097760.1">
    <property type="nucleotide sequence ID" value="NC_000964.3"/>
</dbReference>
<dbReference type="SMR" id="C0H451"/>
<dbReference type="STRING" id="224308.BSU23519"/>
<dbReference type="PaxDb" id="224308-BSU23519"/>
<dbReference type="EnsemblBacteria" id="CAX52660">
    <property type="protein sequence ID" value="CAX52660"/>
    <property type="gene ID" value="BSU_23519"/>
</dbReference>
<dbReference type="GeneID" id="8302907"/>
<dbReference type="KEGG" id="bsu:BSU23519"/>
<dbReference type="PATRIC" id="fig|224308.179.peg.2562"/>
<dbReference type="eggNOG" id="ENOG50333IZ">
    <property type="taxonomic scope" value="Bacteria"/>
</dbReference>
<dbReference type="InParanoid" id="C0H451"/>
<dbReference type="OrthoDB" id="2691647at2"/>
<dbReference type="BioCyc" id="BSUB:BSU23519-MONOMER"/>
<dbReference type="Proteomes" id="UP000001570">
    <property type="component" value="Chromosome"/>
</dbReference>
<dbReference type="GO" id="GO:0005886">
    <property type="term" value="C:plasma membrane"/>
    <property type="evidence" value="ECO:0007669"/>
    <property type="project" value="UniProtKB-SubCell"/>
</dbReference>
<dbReference type="InterPro" id="IPR025321">
    <property type="entry name" value="DUF4227"/>
</dbReference>
<dbReference type="Pfam" id="PF14004">
    <property type="entry name" value="DUF4227"/>
    <property type="match status" value="1"/>
</dbReference>
<feature type="chain" id="PRO_0000382674" description="Uncharacterized membrane protein YqzK">
    <location>
        <begin position="1"/>
        <end position="75"/>
    </location>
</feature>
<feature type="transmembrane region" description="Helical" evidence="1">
    <location>
        <begin position="12"/>
        <end position="32"/>
    </location>
</feature>
<protein>
    <recommendedName>
        <fullName>Uncharacterized membrane protein YqzK</fullName>
    </recommendedName>
</protein>
<comment type="subcellular location">
    <subcellularLocation>
        <location evidence="2">Cell membrane</location>
        <topology evidence="2">Single-pass membrane protein</topology>
    </subcellularLocation>
</comment>
<gene>
    <name type="primary">yqzK</name>
    <name type="ordered locus">BSU23519</name>
</gene>
<sequence>MGRFLKTAVDALKVFILFTGFTALFYYAMIWVNQEYENYHRYDKPEGSAVKVVEMDQDEKGGWFDRLIFFYQNGE</sequence>
<evidence type="ECO:0000255" key="1"/>
<evidence type="ECO:0000305" key="2"/>
<name>YQZK_BACSU</name>
<reference key="1">
    <citation type="journal article" date="1997" name="Nature">
        <title>The complete genome sequence of the Gram-positive bacterium Bacillus subtilis.</title>
        <authorList>
            <person name="Kunst F."/>
            <person name="Ogasawara N."/>
            <person name="Moszer I."/>
            <person name="Albertini A.M."/>
            <person name="Alloni G."/>
            <person name="Azevedo V."/>
            <person name="Bertero M.G."/>
            <person name="Bessieres P."/>
            <person name="Bolotin A."/>
            <person name="Borchert S."/>
            <person name="Borriss R."/>
            <person name="Boursier L."/>
            <person name="Brans A."/>
            <person name="Braun M."/>
            <person name="Brignell S.C."/>
            <person name="Bron S."/>
            <person name="Brouillet S."/>
            <person name="Bruschi C.V."/>
            <person name="Caldwell B."/>
            <person name="Capuano V."/>
            <person name="Carter N.M."/>
            <person name="Choi S.-K."/>
            <person name="Codani J.-J."/>
            <person name="Connerton I.F."/>
            <person name="Cummings N.J."/>
            <person name="Daniel R.A."/>
            <person name="Denizot F."/>
            <person name="Devine K.M."/>
            <person name="Duesterhoeft A."/>
            <person name="Ehrlich S.D."/>
            <person name="Emmerson P.T."/>
            <person name="Entian K.-D."/>
            <person name="Errington J."/>
            <person name="Fabret C."/>
            <person name="Ferrari E."/>
            <person name="Foulger D."/>
            <person name="Fritz C."/>
            <person name="Fujita M."/>
            <person name="Fujita Y."/>
            <person name="Fuma S."/>
            <person name="Galizzi A."/>
            <person name="Galleron N."/>
            <person name="Ghim S.-Y."/>
            <person name="Glaser P."/>
            <person name="Goffeau A."/>
            <person name="Golightly E.J."/>
            <person name="Grandi G."/>
            <person name="Guiseppi G."/>
            <person name="Guy B.J."/>
            <person name="Haga K."/>
            <person name="Haiech J."/>
            <person name="Harwood C.R."/>
            <person name="Henaut A."/>
            <person name="Hilbert H."/>
            <person name="Holsappel S."/>
            <person name="Hosono S."/>
            <person name="Hullo M.-F."/>
            <person name="Itaya M."/>
            <person name="Jones L.-M."/>
            <person name="Joris B."/>
            <person name="Karamata D."/>
            <person name="Kasahara Y."/>
            <person name="Klaerr-Blanchard M."/>
            <person name="Klein C."/>
            <person name="Kobayashi Y."/>
            <person name="Koetter P."/>
            <person name="Koningstein G."/>
            <person name="Krogh S."/>
            <person name="Kumano M."/>
            <person name="Kurita K."/>
            <person name="Lapidus A."/>
            <person name="Lardinois S."/>
            <person name="Lauber J."/>
            <person name="Lazarevic V."/>
            <person name="Lee S.-M."/>
            <person name="Levine A."/>
            <person name="Liu H."/>
            <person name="Masuda S."/>
            <person name="Mauel C."/>
            <person name="Medigue C."/>
            <person name="Medina N."/>
            <person name="Mellado R.P."/>
            <person name="Mizuno M."/>
            <person name="Moestl D."/>
            <person name="Nakai S."/>
            <person name="Noback M."/>
            <person name="Noone D."/>
            <person name="O'Reilly M."/>
            <person name="Ogawa K."/>
            <person name="Ogiwara A."/>
            <person name="Oudega B."/>
            <person name="Park S.-H."/>
            <person name="Parro V."/>
            <person name="Pohl T.M."/>
            <person name="Portetelle D."/>
            <person name="Porwollik S."/>
            <person name="Prescott A.M."/>
            <person name="Presecan E."/>
            <person name="Pujic P."/>
            <person name="Purnelle B."/>
            <person name="Rapoport G."/>
            <person name="Rey M."/>
            <person name="Reynolds S."/>
            <person name="Rieger M."/>
            <person name="Rivolta C."/>
            <person name="Rocha E."/>
            <person name="Roche B."/>
            <person name="Rose M."/>
            <person name="Sadaie Y."/>
            <person name="Sato T."/>
            <person name="Scanlan E."/>
            <person name="Schleich S."/>
            <person name="Schroeter R."/>
            <person name="Scoffone F."/>
            <person name="Sekiguchi J."/>
            <person name="Sekowska A."/>
            <person name="Seror S.J."/>
            <person name="Serror P."/>
            <person name="Shin B.-S."/>
            <person name="Soldo B."/>
            <person name="Sorokin A."/>
            <person name="Tacconi E."/>
            <person name="Takagi T."/>
            <person name="Takahashi H."/>
            <person name="Takemaru K."/>
            <person name="Takeuchi M."/>
            <person name="Tamakoshi A."/>
            <person name="Tanaka T."/>
            <person name="Terpstra P."/>
            <person name="Tognoni A."/>
            <person name="Tosato V."/>
            <person name="Uchiyama S."/>
            <person name="Vandenbol M."/>
            <person name="Vannier F."/>
            <person name="Vassarotti A."/>
            <person name="Viari A."/>
            <person name="Wambutt R."/>
            <person name="Wedler E."/>
            <person name="Wedler H."/>
            <person name="Weitzenegger T."/>
            <person name="Winters P."/>
            <person name="Wipat A."/>
            <person name="Yamamoto H."/>
            <person name="Yamane K."/>
            <person name="Yasumoto K."/>
            <person name="Yata K."/>
            <person name="Yoshida K."/>
            <person name="Yoshikawa H.-F."/>
            <person name="Zumstein E."/>
            <person name="Yoshikawa H."/>
            <person name="Danchin A."/>
        </authorList>
    </citation>
    <scope>NUCLEOTIDE SEQUENCE [LARGE SCALE GENOMIC DNA]</scope>
    <source>
        <strain>168</strain>
    </source>
</reference>
<keyword id="KW-1003">Cell membrane</keyword>
<keyword id="KW-0472">Membrane</keyword>
<keyword id="KW-1185">Reference proteome</keyword>
<keyword id="KW-0812">Transmembrane</keyword>
<keyword id="KW-1133">Transmembrane helix</keyword>
<organism>
    <name type="scientific">Bacillus subtilis (strain 168)</name>
    <dbReference type="NCBI Taxonomy" id="224308"/>
    <lineage>
        <taxon>Bacteria</taxon>
        <taxon>Bacillati</taxon>
        <taxon>Bacillota</taxon>
        <taxon>Bacilli</taxon>
        <taxon>Bacillales</taxon>
        <taxon>Bacillaceae</taxon>
        <taxon>Bacillus</taxon>
    </lineage>
</organism>